<feature type="chain" id="PRO_0000267903" description="Large ribosomal subunit protein bL17">
    <location>
        <begin position="1"/>
        <end position="130"/>
    </location>
</feature>
<gene>
    <name evidence="1" type="primary">rplQ</name>
    <name type="ordered locus">NE0427</name>
</gene>
<dbReference type="EMBL" id="AL954747">
    <property type="protein sequence ID" value="CAD84338.1"/>
    <property type="molecule type" value="Genomic_DNA"/>
</dbReference>
<dbReference type="RefSeq" id="WP_011111062.1">
    <property type="nucleotide sequence ID" value="NC_004757.1"/>
</dbReference>
<dbReference type="SMR" id="Q82X68"/>
<dbReference type="STRING" id="228410.NE0427"/>
<dbReference type="GeneID" id="87103634"/>
<dbReference type="KEGG" id="neu:NE0427"/>
<dbReference type="eggNOG" id="COG0203">
    <property type="taxonomic scope" value="Bacteria"/>
</dbReference>
<dbReference type="HOGENOM" id="CLU_074407_2_0_4"/>
<dbReference type="OrthoDB" id="9809073at2"/>
<dbReference type="PhylomeDB" id="Q82X68"/>
<dbReference type="Proteomes" id="UP000001416">
    <property type="component" value="Chromosome"/>
</dbReference>
<dbReference type="GO" id="GO:0022625">
    <property type="term" value="C:cytosolic large ribosomal subunit"/>
    <property type="evidence" value="ECO:0007669"/>
    <property type="project" value="TreeGrafter"/>
</dbReference>
<dbReference type="GO" id="GO:0003735">
    <property type="term" value="F:structural constituent of ribosome"/>
    <property type="evidence" value="ECO:0007669"/>
    <property type="project" value="InterPro"/>
</dbReference>
<dbReference type="GO" id="GO:0006412">
    <property type="term" value="P:translation"/>
    <property type="evidence" value="ECO:0007669"/>
    <property type="project" value="UniProtKB-UniRule"/>
</dbReference>
<dbReference type="FunFam" id="3.90.1030.10:FF:000001">
    <property type="entry name" value="50S ribosomal protein L17"/>
    <property type="match status" value="1"/>
</dbReference>
<dbReference type="Gene3D" id="3.90.1030.10">
    <property type="entry name" value="Ribosomal protein L17"/>
    <property type="match status" value="1"/>
</dbReference>
<dbReference type="HAMAP" id="MF_01368">
    <property type="entry name" value="Ribosomal_bL17"/>
    <property type="match status" value="1"/>
</dbReference>
<dbReference type="InterPro" id="IPR000456">
    <property type="entry name" value="Ribosomal_bL17"/>
</dbReference>
<dbReference type="InterPro" id="IPR047859">
    <property type="entry name" value="Ribosomal_bL17_CS"/>
</dbReference>
<dbReference type="InterPro" id="IPR036373">
    <property type="entry name" value="Ribosomal_bL17_sf"/>
</dbReference>
<dbReference type="NCBIfam" id="TIGR00059">
    <property type="entry name" value="L17"/>
    <property type="match status" value="1"/>
</dbReference>
<dbReference type="PANTHER" id="PTHR14413:SF16">
    <property type="entry name" value="LARGE RIBOSOMAL SUBUNIT PROTEIN BL17M"/>
    <property type="match status" value="1"/>
</dbReference>
<dbReference type="PANTHER" id="PTHR14413">
    <property type="entry name" value="RIBOSOMAL PROTEIN L17"/>
    <property type="match status" value="1"/>
</dbReference>
<dbReference type="Pfam" id="PF01196">
    <property type="entry name" value="Ribosomal_L17"/>
    <property type="match status" value="1"/>
</dbReference>
<dbReference type="SUPFAM" id="SSF64263">
    <property type="entry name" value="Prokaryotic ribosomal protein L17"/>
    <property type="match status" value="1"/>
</dbReference>
<dbReference type="PROSITE" id="PS01167">
    <property type="entry name" value="RIBOSOMAL_L17"/>
    <property type="match status" value="1"/>
</dbReference>
<reference key="1">
    <citation type="journal article" date="2003" name="J. Bacteriol.">
        <title>Complete genome sequence of the ammonia-oxidizing bacterium and obligate chemolithoautotroph Nitrosomonas europaea.</title>
        <authorList>
            <person name="Chain P."/>
            <person name="Lamerdin J.E."/>
            <person name="Larimer F.W."/>
            <person name="Regala W."/>
            <person name="Lao V."/>
            <person name="Land M.L."/>
            <person name="Hauser L."/>
            <person name="Hooper A.B."/>
            <person name="Klotz M.G."/>
            <person name="Norton J."/>
            <person name="Sayavedra-Soto L.A."/>
            <person name="Arciero D.M."/>
            <person name="Hommes N.G."/>
            <person name="Whittaker M.M."/>
            <person name="Arp D.J."/>
        </authorList>
    </citation>
    <scope>NUCLEOTIDE SEQUENCE [LARGE SCALE GENOMIC DNA]</scope>
    <source>
        <strain>ATCC 19718 / CIP 103999 / KCTC 2705 / NBRC 14298</strain>
    </source>
</reference>
<protein>
    <recommendedName>
        <fullName evidence="1">Large ribosomal subunit protein bL17</fullName>
    </recommendedName>
    <alternativeName>
        <fullName evidence="2">50S ribosomal protein L17</fullName>
    </alternativeName>
</protein>
<accession>Q82X68</accession>
<name>RL17_NITEU</name>
<proteinExistence type="inferred from homology"/>
<keyword id="KW-1185">Reference proteome</keyword>
<keyword id="KW-0687">Ribonucleoprotein</keyword>
<keyword id="KW-0689">Ribosomal protein</keyword>
<sequence>MRHRNGLRKLNRTSSHRLAMFRNLTNSLLEHEIIKTTLPKAKELRRVVEPVITLGKNPSLAGKRLAFDRLRNRDNVIKIFSELGPRYQNRNGGYIRILKCGFRRGDNAPMAIVELLDRPEAGIISNDSAD</sequence>
<comment type="subunit">
    <text evidence="1">Part of the 50S ribosomal subunit. Contacts protein L32.</text>
</comment>
<comment type="similarity">
    <text evidence="1">Belongs to the bacterial ribosomal protein bL17 family.</text>
</comment>
<evidence type="ECO:0000255" key="1">
    <source>
        <dbReference type="HAMAP-Rule" id="MF_01368"/>
    </source>
</evidence>
<evidence type="ECO:0000305" key="2"/>
<organism>
    <name type="scientific">Nitrosomonas europaea (strain ATCC 19718 / CIP 103999 / KCTC 2705 / NBRC 14298)</name>
    <dbReference type="NCBI Taxonomy" id="228410"/>
    <lineage>
        <taxon>Bacteria</taxon>
        <taxon>Pseudomonadati</taxon>
        <taxon>Pseudomonadota</taxon>
        <taxon>Betaproteobacteria</taxon>
        <taxon>Nitrosomonadales</taxon>
        <taxon>Nitrosomonadaceae</taxon>
        <taxon>Nitrosomonas</taxon>
    </lineage>
</organism>